<proteinExistence type="inferred from homology"/>
<comment type="function">
    <text evidence="1">Involved in chemotaxis. Part of a chemotaxis signal transduction system that modulates chemotaxis in response to various stimuli. Catalyzes the demethylation of specific methylglutamate residues introduced into the chemoreceptors (methyl-accepting chemotaxis proteins or MCP) by CheR. Also mediates the irreversible deamidation of specific glutamine residues to glutamic acid.</text>
</comment>
<comment type="catalytic activity">
    <reaction evidence="1">
        <text>[protein]-L-glutamate 5-O-methyl ester + H2O = L-glutamyl-[protein] + methanol + H(+)</text>
        <dbReference type="Rhea" id="RHEA:23236"/>
        <dbReference type="Rhea" id="RHEA-COMP:10208"/>
        <dbReference type="Rhea" id="RHEA-COMP:10311"/>
        <dbReference type="ChEBI" id="CHEBI:15377"/>
        <dbReference type="ChEBI" id="CHEBI:15378"/>
        <dbReference type="ChEBI" id="CHEBI:17790"/>
        <dbReference type="ChEBI" id="CHEBI:29973"/>
        <dbReference type="ChEBI" id="CHEBI:82795"/>
        <dbReference type="EC" id="3.1.1.61"/>
    </reaction>
</comment>
<comment type="catalytic activity">
    <reaction evidence="1">
        <text>L-glutaminyl-[protein] + H2O = L-glutamyl-[protein] + NH4(+)</text>
        <dbReference type="Rhea" id="RHEA:16441"/>
        <dbReference type="Rhea" id="RHEA-COMP:10207"/>
        <dbReference type="Rhea" id="RHEA-COMP:10208"/>
        <dbReference type="ChEBI" id="CHEBI:15377"/>
        <dbReference type="ChEBI" id="CHEBI:28938"/>
        <dbReference type="ChEBI" id="CHEBI:29973"/>
        <dbReference type="ChEBI" id="CHEBI:30011"/>
        <dbReference type="EC" id="3.5.1.44"/>
    </reaction>
</comment>
<comment type="subcellular location">
    <subcellularLocation>
        <location evidence="1">Cytoplasm</location>
    </subcellularLocation>
</comment>
<comment type="domain">
    <text evidence="1">Contains a C-terminal catalytic domain, and an N-terminal region which modulates catalytic activity.</text>
</comment>
<comment type="PTM">
    <text evidence="1">Phosphorylated by CheA. Phosphorylation of the N-terminal regulatory domain activates the methylesterase activity.</text>
</comment>
<comment type="similarity">
    <text evidence="1">Belongs to the CheB family.</text>
</comment>
<gene>
    <name evidence="1" type="primary">cheB</name>
    <name type="ordered locus">c2298</name>
</gene>
<dbReference type="EC" id="3.1.1.61" evidence="1"/>
<dbReference type="EC" id="3.5.1.44" evidence="1"/>
<dbReference type="EMBL" id="AE014075">
    <property type="protein sequence ID" value="AAN80757.1"/>
    <property type="molecule type" value="Genomic_DNA"/>
</dbReference>
<dbReference type="RefSeq" id="WP_000036371.1">
    <property type="nucleotide sequence ID" value="NZ_CP051263.1"/>
</dbReference>
<dbReference type="SMR" id="Q8FGP5"/>
<dbReference type="STRING" id="199310.c2298"/>
<dbReference type="GeneID" id="93776188"/>
<dbReference type="KEGG" id="ecc:c2298"/>
<dbReference type="eggNOG" id="COG2201">
    <property type="taxonomic scope" value="Bacteria"/>
</dbReference>
<dbReference type="HOGENOM" id="CLU_000445_51_0_6"/>
<dbReference type="BioCyc" id="ECOL199310:C2298-MONOMER"/>
<dbReference type="Proteomes" id="UP000001410">
    <property type="component" value="Chromosome"/>
</dbReference>
<dbReference type="GO" id="GO:0005737">
    <property type="term" value="C:cytoplasm"/>
    <property type="evidence" value="ECO:0007669"/>
    <property type="project" value="UniProtKB-SubCell"/>
</dbReference>
<dbReference type="GO" id="GO:0000156">
    <property type="term" value="F:phosphorelay response regulator activity"/>
    <property type="evidence" value="ECO:0007669"/>
    <property type="project" value="InterPro"/>
</dbReference>
<dbReference type="GO" id="GO:0008984">
    <property type="term" value="F:protein-glutamate methylesterase activity"/>
    <property type="evidence" value="ECO:0007669"/>
    <property type="project" value="UniProtKB-UniRule"/>
</dbReference>
<dbReference type="GO" id="GO:0050568">
    <property type="term" value="F:protein-glutamine glutaminase activity"/>
    <property type="evidence" value="ECO:0007669"/>
    <property type="project" value="UniProtKB-UniRule"/>
</dbReference>
<dbReference type="GO" id="GO:0006935">
    <property type="term" value="P:chemotaxis"/>
    <property type="evidence" value="ECO:0007669"/>
    <property type="project" value="UniProtKB-UniRule"/>
</dbReference>
<dbReference type="CDD" id="cd16432">
    <property type="entry name" value="CheB_Rec"/>
    <property type="match status" value="1"/>
</dbReference>
<dbReference type="CDD" id="cd17541">
    <property type="entry name" value="REC_CheB-like"/>
    <property type="match status" value="1"/>
</dbReference>
<dbReference type="FunFam" id="3.40.50.180:FF:000001">
    <property type="entry name" value="Protein-glutamate methylesterase/protein-glutamine glutaminase"/>
    <property type="match status" value="1"/>
</dbReference>
<dbReference type="FunFam" id="3.40.50.2300:FF:000060">
    <property type="entry name" value="Protein-glutamate methylesterase/protein-glutamine glutaminase"/>
    <property type="match status" value="1"/>
</dbReference>
<dbReference type="Gene3D" id="3.40.50.2300">
    <property type="match status" value="1"/>
</dbReference>
<dbReference type="Gene3D" id="3.40.50.180">
    <property type="entry name" value="Methylesterase CheB, C-terminal domain"/>
    <property type="match status" value="1"/>
</dbReference>
<dbReference type="HAMAP" id="MF_00099">
    <property type="entry name" value="CheB_chemtxs"/>
    <property type="match status" value="1"/>
</dbReference>
<dbReference type="InterPro" id="IPR008248">
    <property type="entry name" value="CheB-like"/>
</dbReference>
<dbReference type="InterPro" id="IPR035909">
    <property type="entry name" value="CheB_C"/>
</dbReference>
<dbReference type="InterPro" id="IPR011006">
    <property type="entry name" value="CheY-like_superfamily"/>
</dbReference>
<dbReference type="InterPro" id="IPR000673">
    <property type="entry name" value="Sig_transdc_resp-reg_Me-estase"/>
</dbReference>
<dbReference type="InterPro" id="IPR001789">
    <property type="entry name" value="Sig_transdc_resp-reg_receiver"/>
</dbReference>
<dbReference type="NCBIfam" id="NF001965">
    <property type="entry name" value="PRK00742.1"/>
    <property type="match status" value="1"/>
</dbReference>
<dbReference type="NCBIfam" id="NF009206">
    <property type="entry name" value="PRK12555.1"/>
    <property type="match status" value="1"/>
</dbReference>
<dbReference type="PANTHER" id="PTHR42872">
    <property type="entry name" value="PROTEIN-GLUTAMATE METHYLESTERASE/PROTEIN-GLUTAMINE GLUTAMINASE"/>
    <property type="match status" value="1"/>
</dbReference>
<dbReference type="PANTHER" id="PTHR42872:SF6">
    <property type="entry name" value="PROTEIN-GLUTAMATE METHYLESTERASE_PROTEIN-GLUTAMINE GLUTAMINASE"/>
    <property type="match status" value="1"/>
</dbReference>
<dbReference type="Pfam" id="PF01339">
    <property type="entry name" value="CheB_methylest"/>
    <property type="match status" value="1"/>
</dbReference>
<dbReference type="Pfam" id="PF00072">
    <property type="entry name" value="Response_reg"/>
    <property type="match status" value="1"/>
</dbReference>
<dbReference type="PIRSF" id="PIRSF000876">
    <property type="entry name" value="RR_chemtxs_CheB"/>
    <property type="match status" value="1"/>
</dbReference>
<dbReference type="SMART" id="SM00448">
    <property type="entry name" value="REC"/>
    <property type="match status" value="1"/>
</dbReference>
<dbReference type="SUPFAM" id="SSF52172">
    <property type="entry name" value="CheY-like"/>
    <property type="match status" value="1"/>
</dbReference>
<dbReference type="SUPFAM" id="SSF52738">
    <property type="entry name" value="Methylesterase CheB, C-terminal domain"/>
    <property type="match status" value="1"/>
</dbReference>
<dbReference type="PROSITE" id="PS50122">
    <property type="entry name" value="CHEB"/>
    <property type="match status" value="1"/>
</dbReference>
<dbReference type="PROSITE" id="PS50110">
    <property type="entry name" value="RESPONSE_REGULATORY"/>
    <property type="match status" value="1"/>
</dbReference>
<feature type="chain" id="PRO_0000157993" description="Protein-glutamate methylesterase/protein-glutamine glutaminase">
    <location>
        <begin position="1"/>
        <end position="349"/>
    </location>
</feature>
<feature type="domain" description="Response regulatory" evidence="1">
    <location>
        <begin position="5"/>
        <end position="122"/>
    </location>
</feature>
<feature type="domain" description="CheB-type methylesterase" evidence="1">
    <location>
        <begin position="152"/>
        <end position="344"/>
    </location>
</feature>
<feature type="active site" evidence="1">
    <location>
        <position position="164"/>
    </location>
</feature>
<feature type="active site" evidence="1">
    <location>
        <position position="190"/>
    </location>
</feature>
<feature type="active site" evidence="1">
    <location>
        <position position="286"/>
    </location>
</feature>
<feature type="modified residue" description="4-aspartylphosphate" evidence="1">
    <location>
        <position position="56"/>
    </location>
</feature>
<keyword id="KW-0145">Chemotaxis</keyword>
<keyword id="KW-0963">Cytoplasm</keyword>
<keyword id="KW-0378">Hydrolase</keyword>
<keyword id="KW-0597">Phosphoprotein</keyword>
<keyword id="KW-1185">Reference proteome</keyword>
<accession>Q8FGP5</accession>
<organism>
    <name type="scientific">Escherichia coli O6:H1 (strain CFT073 / ATCC 700928 / UPEC)</name>
    <dbReference type="NCBI Taxonomy" id="199310"/>
    <lineage>
        <taxon>Bacteria</taxon>
        <taxon>Pseudomonadati</taxon>
        <taxon>Pseudomonadota</taxon>
        <taxon>Gammaproteobacteria</taxon>
        <taxon>Enterobacterales</taxon>
        <taxon>Enterobacteriaceae</taxon>
        <taxon>Escherichia</taxon>
    </lineage>
</organism>
<sequence length="349" mass="37425">MSKIRVLSVDDSALMRQIMTEIINSHSDMEMVATAPDPLVARDLIKKFNPDVLTLDVEMPRMDGLDFLEKLMRLRPMPVVMVSSLTGKGSEVTLRALELGAIDFVTKPQLGIREGMLAYSEMIAEKVRTAAKASLAAHKPLSAPTTLKAGPLLSSEKLIAIGASTGGTEAIRHVLQPLPLSSPALLITQHMPPGFTRSFADRLNKLCQIGVKEAEDGERVLPGHAYIAPGDRHMELARSGANYQIKIHDGPAVNRHRPSVDVLFHSVAKQAGRNAVGVILTGMGNDGAAGMLAMRQAGAWTLAQNEASCVVFGMPREAINMGGVCEVVDLSQVSQQMLAKISAGQAIRI</sequence>
<protein>
    <recommendedName>
        <fullName evidence="1">Protein-glutamate methylesterase/protein-glutamine glutaminase</fullName>
        <ecNumber evidence="1">3.1.1.61</ecNumber>
        <ecNumber evidence="1">3.5.1.44</ecNumber>
    </recommendedName>
</protein>
<name>CHEB_ECOL6</name>
<reference key="1">
    <citation type="journal article" date="2002" name="Proc. Natl. Acad. Sci. U.S.A.">
        <title>Extensive mosaic structure revealed by the complete genome sequence of uropathogenic Escherichia coli.</title>
        <authorList>
            <person name="Welch R.A."/>
            <person name="Burland V."/>
            <person name="Plunkett G. III"/>
            <person name="Redford P."/>
            <person name="Roesch P."/>
            <person name="Rasko D."/>
            <person name="Buckles E.L."/>
            <person name="Liou S.-R."/>
            <person name="Boutin A."/>
            <person name="Hackett J."/>
            <person name="Stroud D."/>
            <person name="Mayhew G.F."/>
            <person name="Rose D.J."/>
            <person name="Zhou S."/>
            <person name="Schwartz D.C."/>
            <person name="Perna N.T."/>
            <person name="Mobley H.L.T."/>
            <person name="Donnenberg M.S."/>
            <person name="Blattner F.R."/>
        </authorList>
    </citation>
    <scope>NUCLEOTIDE SEQUENCE [LARGE SCALE GENOMIC DNA]</scope>
    <source>
        <strain>CFT073 / ATCC 700928 / UPEC</strain>
    </source>
</reference>
<evidence type="ECO:0000255" key="1">
    <source>
        <dbReference type="HAMAP-Rule" id="MF_00099"/>
    </source>
</evidence>